<proteinExistence type="inferred from homology"/>
<name>RNPA_SALDC</name>
<gene>
    <name evidence="1" type="primary">rnpA</name>
    <name type="ordered locus">SeD_A4232</name>
</gene>
<protein>
    <recommendedName>
        <fullName evidence="1">Ribonuclease P protein component</fullName>
        <shortName evidence="1">RNase P protein</shortName>
        <shortName evidence="1">RNaseP protein</shortName>
        <ecNumber evidence="1">3.1.26.5</ecNumber>
    </recommendedName>
    <alternativeName>
        <fullName evidence="1">Protein C5</fullName>
    </alternativeName>
</protein>
<comment type="function">
    <text evidence="1">RNaseP catalyzes the removal of the 5'-leader sequence from pre-tRNA to produce the mature 5'-terminus. It can also cleave other RNA substrates such as 4.5S RNA. The protein component plays an auxiliary but essential role in vivo by binding to the 5'-leader sequence and broadening the substrate specificity of the ribozyme.</text>
</comment>
<comment type="catalytic activity">
    <reaction evidence="1">
        <text>Endonucleolytic cleavage of RNA, removing 5'-extranucleotides from tRNA precursor.</text>
        <dbReference type="EC" id="3.1.26.5"/>
    </reaction>
</comment>
<comment type="subunit">
    <text evidence="1">Consists of a catalytic RNA component (M1 or rnpB) and a protein subunit.</text>
</comment>
<comment type="similarity">
    <text evidence="1">Belongs to the RnpA family.</text>
</comment>
<sequence>MVKLAFPRELRLLTPAHFTFVFQQPQRAGTPQITILGRLNSLGHPRIGLTVAKKNVRRAHERNRIKRLTRESFRLRQHELPAMDFVVVAKKGVADLDNRALSEALEKLWRRHCRLARGS</sequence>
<feature type="chain" id="PRO_1000100386" description="Ribonuclease P protein component">
    <location>
        <begin position="1"/>
        <end position="119"/>
    </location>
</feature>
<accession>B5FN12</accession>
<reference key="1">
    <citation type="journal article" date="2011" name="J. Bacteriol.">
        <title>Comparative genomics of 28 Salmonella enterica isolates: evidence for CRISPR-mediated adaptive sublineage evolution.</title>
        <authorList>
            <person name="Fricke W.F."/>
            <person name="Mammel M.K."/>
            <person name="McDermott P.F."/>
            <person name="Tartera C."/>
            <person name="White D.G."/>
            <person name="Leclerc J.E."/>
            <person name="Ravel J."/>
            <person name="Cebula T.A."/>
        </authorList>
    </citation>
    <scope>NUCLEOTIDE SEQUENCE [LARGE SCALE GENOMIC DNA]</scope>
    <source>
        <strain>CT_02021853</strain>
    </source>
</reference>
<keyword id="KW-0255">Endonuclease</keyword>
<keyword id="KW-0378">Hydrolase</keyword>
<keyword id="KW-0540">Nuclease</keyword>
<keyword id="KW-0694">RNA-binding</keyword>
<keyword id="KW-0819">tRNA processing</keyword>
<organism>
    <name type="scientific">Salmonella dublin (strain CT_02021853)</name>
    <dbReference type="NCBI Taxonomy" id="439851"/>
    <lineage>
        <taxon>Bacteria</taxon>
        <taxon>Pseudomonadati</taxon>
        <taxon>Pseudomonadota</taxon>
        <taxon>Gammaproteobacteria</taxon>
        <taxon>Enterobacterales</taxon>
        <taxon>Enterobacteriaceae</taxon>
        <taxon>Salmonella</taxon>
    </lineage>
</organism>
<evidence type="ECO:0000255" key="1">
    <source>
        <dbReference type="HAMAP-Rule" id="MF_00227"/>
    </source>
</evidence>
<dbReference type="EC" id="3.1.26.5" evidence="1"/>
<dbReference type="EMBL" id="CP001144">
    <property type="protein sequence ID" value="ACH75635.1"/>
    <property type="molecule type" value="Genomic_DNA"/>
</dbReference>
<dbReference type="RefSeq" id="WP_000239725.1">
    <property type="nucleotide sequence ID" value="NC_011205.1"/>
</dbReference>
<dbReference type="SMR" id="B5FN12"/>
<dbReference type="GeneID" id="93035306"/>
<dbReference type="KEGG" id="sed:SeD_A4232"/>
<dbReference type="HOGENOM" id="CLU_117179_11_0_6"/>
<dbReference type="Proteomes" id="UP000008322">
    <property type="component" value="Chromosome"/>
</dbReference>
<dbReference type="GO" id="GO:0030677">
    <property type="term" value="C:ribonuclease P complex"/>
    <property type="evidence" value="ECO:0007669"/>
    <property type="project" value="TreeGrafter"/>
</dbReference>
<dbReference type="GO" id="GO:0042781">
    <property type="term" value="F:3'-tRNA processing endoribonuclease activity"/>
    <property type="evidence" value="ECO:0007669"/>
    <property type="project" value="TreeGrafter"/>
</dbReference>
<dbReference type="GO" id="GO:0004526">
    <property type="term" value="F:ribonuclease P activity"/>
    <property type="evidence" value="ECO:0007669"/>
    <property type="project" value="UniProtKB-UniRule"/>
</dbReference>
<dbReference type="GO" id="GO:0000049">
    <property type="term" value="F:tRNA binding"/>
    <property type="evidence" value="ECO:0007669"/>
    <property type="project" value="UniProtKB-UniRule"/>
</dbReference>
<dbReference type="GO" id="GO:0001682">
    <property type="term" value="P:tRNA 5'-leader removal"/>
    <property type="evidence" value="ECO:0007669"/>
    <property type="project" value="UniProtKB-UniRule"/>
</dbReference>
<dbReference type="FunFam" id="3.30.230.10:FF:000016">
    <property type="entry name" value="Ribonuclease P protein component"/>
    <property type="match status" value="1"/>
</dbReference>
<dbReference type="Gene3D" id="3.30.230.10">
    <property type="match status" value="1"/>
</dbReference>
<dbReference type="HAMAP" id="MF_00227">
    <property type="entry name" value="RNase_P"/>
    <property type="match status" value="1"/>
</dbReference>
<dbReference type="InterPro" id="IPR020568">
    <property type="entry name" value="Ribosomal_Su5_D2-typ_SF"/>
</dbReference>
<dbReference type="InterPro" id="IPR014721">
    <property type="entry name" value="Ribsml_uS5_D2-typ_fold_subgr"/>
</dbReference>
<dbReference type="InterPro" id="IPR000100">
    <property type="entry name" value="RNase_P"/>
</dbReference>
<dbReference type="InterPro" id="IPR020539">
    <property type="entry name" value="RNase_P_CS"/>
</dbReference>
<dbReference type="NCBIfam" id="TIGR00188">
    <property type="entry name" value="rnpA"/>
    <property type="match status" value="1"/>
</dbReference>
<dbReference type="PANTHER" id="PTHR33992">
    <property type="entry name" value="RIBONUCLEASE P PROTEIN COMPONENT"/>
    <property type="match status" value="1"/>
</dbReference>
<dbReference type="PANTHER" id="PTHR33992:SF1">
    <property type="entry name" value="RIBONUCLEASE P PROTEIN COMPONENT"/>
    <property type="match status" value="1"/>
</dbReference>
<dbReference type="Pfam" id="PF00825">
    <property type="entry name" value="Ribonuclease_P"/>
    <property type="match status" value="1"/>
</dbReference>
<dbReference type="SUPFAM" id="SSF54211">
    <property type="entry name" value="Ribosomal protein S5 domain 2-like"/>
    <property type="match status" value="1"/>
</dbReference>
<dbReference type="PROSITE" id="PS00648">
    <property type="entry name" value="RIBONUCLEASE_P"/>
    <property type="match status" value="1"/>
</dbReference>